<protein>
    <recommendedName>
        <fullName evidence="1">DNA-directed RNA polymerase subunit alpha</fullName>
        <shortName evidence="1">RNAP subunit alpha</shortName>
        <ecNumber evidence="1">2.7.7.6</ecNumber>
    </recommendedName>
    <alternativeName>
        <fullName evidence="1">RNA polymerase subunit alpha</fullName>
    </alternativeName>
    <alternativeName>
        <fullName evidence="1">Transcriptase subunit alpha</fullName>
    </alternativeName>
</protein>
<gene>
    <name evidence="1" type="primary">rpoA</name>
    <name type="ordered locus">XF_1176</name>
</gene>
<organism>
    <name type="scientific">Xylella fastidiosa (strain 9a5c)</name>
    <dbReference type="NCBI Taxonomy" id="160492"/>
    <lineage>
        <taxon>Bacteria</taxon>
        <taxon>Pseudomonadati</taxon>
        <taxon>Pseudomonadota</taxon>
        <taxon>Gammaproteobacteria</taxon>
        <taxon>Lysobacterales</taxon>
        <taxon>Lysobacteraceae</taxon>
        <taxon>Xylella</taxon>
    </lineage>
</organism>
<reference key="1">
    <citation type="journal article" date="2000" name="Nature">
        <title>The genome sequence of the plant pathogen Xylella fastidiosa.</title>
        <authorList>
            <person name="Simpson A.J.G."/>
            <person name="Reinach F.C."/>
            <person name="Arruda P."/>
            <person name="Abreu F.A."/>
            <person name="Acencio M."/>
            <person name="Alvarenga R."/>
            <person name="Alves L.M.C."/>
            <person name="Araya J.E."/>
            <person name="Baia G.S."/>
            <person name="Baptista C.S."/>
            <person name="Barros M.H."/>
            <person name="Bonaccorsi E.D."/>
            <person name="Bordin S."/>
            <person name="Bove J.M."/>
            <person name="Briones M.R.S."/>
            <person name="Bueno M.R.P."/>
            <person name="Camargo A.A."/>
            <person name="Camargo L.E.A."/>
            <person name="Carraro D.M."/>
            <person name="Carrer H."/>
            <person name="Colauto N.B."/>
            <person name="Colombo C."/>
            <person name="Costa F.F."/>
            <person name="Costa M.C.R."/>
            <person name="Costa-Neto C.M."/>
            <person name="Coutinho L.L."/>
            <person name="Cristofani M."/>
            <person name="Dias-Neto E."/>
            <person name="Docena C."/>
            <person name="El-Dorry H."/>
            <person name="Facincani A.P."/>
            <person name="Ferreira A.J.S."/>
            <person name="Ferreira V.C.A."/>
            <person name="Ferro J.A."/>
            <person name="Fraga J.S."/>
            <person name="Franca S.C."/>
            <person name="Franco M.C."/>
            <person name="Frohme M."/>
            <person name="Furlan L.R."/>
            <person name="Garnier M."/>
            <person name="Goldman G.H."/>
            <person name="Goldman M.H.S."/>
            <person name="Gomes S.L."/>
            <person name="Gruber A."/>
            <person name="Ho P.L."/>
            <person name="Hoheisel J.D."/>
            <person name="Junqueira M.L."/>
            <person name="Kemper E.L."/>
            <person name="Kitajima J.P."/>
            <person name="Krieger J.E."/>
            <person name="Kuramae E.E."/>
            <person name="Laigret F."/>
            <person name="Lambais M.R."/>
            <person name="Leite L.C.C."/>
            <person name="Lemos E.G.M."/>
            <person name="Lemos M.V.F."/>
            <person name="Lopes S.A."/>
            <person name="Lopes C.R."/>
            <person name="Machado J.A."/>
            <person name="Machado M.A."/>
            <person name="Madeira A.M.B.N."/>
            <person name="Madeira H.M.F."/>
            <person name="Marino C.L."/>
            <person name="Marques M.V."/>
            <person name="Martins E.A.L."/>
            <person name="Martins E.M.F."/>
            <person name="Matsukuma A.Y."/>
            <person name="Menck C.F.M."/>
            <person name="Miracca E.C."/>
            <person name="Miyaki C.Y."/>
            <person name="Monteiro-Vitorello C.B."/>
            <person name="Moon D.H."/>
            <person name="Nagai M.A."/>
            <person name="Nascimento A.L.T.O."/>
            <person name="Netto L.E.S."/>
            <person name="Nhani A. Jr."/>
            <person name="Nobrega F.G."/>
            <person name="Nunes L.R."/>
            <person name="Oliveira M.A."/>
            <person name="de Oliveira M.C."/>
            <person name="de Oliveira R.C."/>
            <person name="Palmieri D.A."/>
            <person name="Paris A."/>
            <person name="Peixoto B.R."/>
            <person name="Pereira G.A.G."/>
            <person name="Pereira H.A. Jr."/>
            <person name="Pesquero J.B."/>
            <person name="Quaggio R.B."/>
            <person name="Roberto P.G."/>
            <person name="Rodrigues V."/>
            <person name="de Rosa A.J.M."/>
            <person name="de Rosa V.E. Jr."/>
            <person name="de Sa R.G."/>
            <person name="Santelli R.V."/>
            <person name="Sawasaki H.E."/>
            <person name="da Silva A.C.R."/>
            <person name="da Silva A.M."/>
            <person name="da Silva F.R."/>
            <person name="Silva W.A. Jr."/>
            <person name="da Silveira J.F."/>
            <person name="Silvestri M.L.Z."/>
            <person name="Siqueira W.J."/>
            <person name="de Souza A.A."/>
            <person name="de Souza A.P."/>
            <person name="Terenzi M.F."/>
            <person name="Truffi D."/>
            <person name="Tsai S.M."/>
            <person name="Tsuhako M.H."/>
            <person name="Vallada H."/>
            <person name="Van Sluys M.A."/>
            <person name="Verjovski-Almeida S."/>
            <person name="Vettore A.L."/>
            <person name="Zago M.A."/>
            <person name="Zatz M."/>
            <person name="Meidanis J."/>
            <person name="Setubal J.C."/>
        </authorList>
    </citation>
    <scope>NUCLEOTIDE SEQUENCE [LARGE SCALE GENOMIC DNA]</scope>
    <source>
        <strain>9a5c</strain>
    </source>
</reference>
<feature type="chain" id="PRO_0000175425" description="DNA-directed RNA polymerase subunit alpha">
    <location>
        <begin position="1"/>
        <end position="332"/>
    </location>
</feature>
<feature type="region of interest" description="Alpha N-terminal domain (alpha-NTD)" evidence="1">
    <location>
        <begin position="1"/>
        <end position="234"/>
    </location>
</feature>
<feature type="region of interest" description="Alpha C-terminal domain (alpha-CTD)" evidence="1">
    <location>
        <begin position="248"/>
        <end position="332"/>
    </location>
</feature>
<proteinExistence type="inferred from homology"/>
<name>RPOA_XYLFA</name>
<sequence>MTVTVSQVLRPRGPQIERLTENRAKVVLEPLGRGYAHTLGNALRRVLLSSIPGFAITEVEIDGVLHEYTTVEGLQEDVLEVLLNLKDVAIRIHSGDTATLSLFKQGAGVVTAADIKTDHNVEIINDGHVICHLTKDTTINMRLKIERGFGYQPAVVRRRPDDENRTIGRLILDASFSPVRRVAYVVEAARVEQRTDLDKLIIDIETNGTIDAEEALRTAADILTDQLSVFGDFTHRDRGTVKPASSGVDPVLLRPIDDLELTVRSANCLKAESIYYIGDLIQKTEVELLKTPNLGKKSLTEIKEVLGQRGLGLGVKLENWPPPGVSQYGMLG</sequence>
<evidence type="ECO:0000255" key="1">
    <source>
        <dbReference type="HAMAP-Rule" id="MF_00059"/>
    </source>
</evidence>
<keyword id="KW-0240">DNA-directed RNA polymerase</keyword>
<keyword id="KW-0548">Nucleotidyltransferase</keyword>
<keyword id="KW-0804">Transcription</keyword>
<keyword id="KW-0808">Transferase</keyword>
<comment type="function">
    <text evidence="1">DNA-dependent RNA polymerase catalyzes the transcription of DNA into RNA using the four ribonucleoside triphosphates as substrates.</text>
</comment>
<comment type="catalytic activity">
    <reaction evidence="1">
        <text>RNA(n) + a ribonucleoside 5'-triphosphate = RNA(n+1) + diphosphate</text>
        <dbReference type="Rhea" id="RHEA:21248"/>
        <dbReference type="Rhea" id="RHEA-COMP:14527"/>
        <dbReference type="Rhea" id="RHEA-COMP:17342"/>
        <dbReference type="ChEBI" id="CHEBI:33019"/>
        <dbReference type="ChEBI" id="CHEBI:61557"/>
        <dbReference type="ChEBI" id="CHEBI:140395"/>
        <dbReference type="EC" id="2.7.7.6"/>
    </reaction>
</comment>
<comment type="subunit">
    <text evidence="1">Homodimer. The RNAP catalytic core consists of 2 alpha, 1 beta, 1 beta' and 1 omega subunit. When a sigma factor is associated with the core the holoenzyme is formed, which can initiate transcription.</text>
</comment>
<comment type="domain">
    <text evidence="1">The N-terminal domain is essential for RNAP assembly and basal transcription, whereas the C-terminal domain is involved in interaction with transcriptional regulators and with upstream promoter elements.</text>
</comment>
<comment type="similarity">
    <text evidence="1">Belongs to the RNA polymerase alpha chain family.</text>
</comment>
<dbReference type="EC" id="2.7.7.6" evidence="1"/>
<dbReference type="EMBL" id="AE003849">
    <property type="protein sequence ID" value="AAF83986.1"/>
    <property type="molecule type" value="Genomic_DNA"/>
</dbReference>
<dbReference type="PIR" id="A82715">
    <property type="entry name" value="A82715"/>
</dbReference>
<dbReference type="RefSeq" id="WP_004090142.1">
    <property type="nucleotide sequence ID" value="NC_002488.3"/>
</dbReference>
<dbReference type="SMR" id="P66712"/>
<dbReference type="STRING" id="160492.XF_1176"/>
<dbReference type="GeneID" id="93904163"/>
<dbReference type="KEGG" id="xfa:XF_1176"/>
<dbReference type="eggNOG" id="COG0202">
    <property type="taxonomic scope" value="Bacteria"/>
</dbReference>
<dbReference type="HOGENOM" id="CLU_053084_0_0_6"/>
<dbReference type="Proteomes" id="UP000000812">
    <property type="component" value="Chromosome"/>
</dbReference>
<dbReference type="GO" id="GO:0005737">
    <property type="term" value="C:cytoplasm"/>
    <property type="evidence" value="ECO:0007669"/>
    <property type="project" value="UniProtKB-ARBA"/>
</dbReference>
<dbReference type="GO" id="GO:0000428">
    <property type="term" value="C:DNA-directed RNA polymerase complex"/>
    <property type="evidence" value="ECO:0007669"/>
    <property type="project" value="UniProtKB-KW"/>
</dbReference>
<dbReference type="GO" id="GO:0003677">
    <property type="term" value="F:DNA binding"/>
    <property type="evidence" value="ECO:0007669"/>
    <property type="project" value="UniProtKB-UniRule"/>
</dbReference>
<dbReference type="GO" id="GO:0003899">
    <property type="term" value="F:DNA-directed RNA polymerase activity"/>
    <property type="evidence" value="ECO:0007669"/>
    <property type="project" value="UniProtKB-UniRule"/>
</dbReference>
<dbReference type="GO" id="GO:0046983">
    <property type="term" value="F:protein dimerization activity"/>
    <property type="evidence" value="ECO:0007669"/>
    <property type="project" value="InterPro"/>
</dbReference>
<dbReference type="GO" id="GO:0006351">
    <property type="term" value="P:DNA-templated transcription"/>
    <property type="evidence" value="ECO:0007669"/>
    <property type="project" value="UniProtKB-UniRule"/>
</dbReference>
<dbReference type="CDD" id="cd06928">
    <property type="entry name" value="RNAP_alpha_NTD"/>
    <property type="match status" value="1"/>
</dbReference>
<dbReference type="FunFam" id="1.10.150.20:FF:000001">
    <property type="entry name" value="DNA-directed RNA polymerase subunit alpha"/>
    <property type="match status" value="1"/>
</dbReference>
<dbReference type="FunFam" id="2.170.120.12:FF:000001">
    <property type="entry name" value="DNA-directed RNA polymerase subunit alpha"/>
    <property type="match status" value="1"/>
</dbReference>
<dbReference type="Gene3D" id="1.10.150.20">
    <property type="entry name" value="5' to 3' exonuclease, C-terminal subdomain"/>
    <property type="match status" value="1"/>
</dbReference>
<dbReference type="Gene3D" id="2.170.120.12">
    <property type="entry name" value="DNA-directed RNA polymerase, insert domain"/>
    <property type="match status" value="1"/>
</dbReference>
<dbReference type="Gene3D" id="3.30.1360.10">
    <property type="entry name" value="RNA polymerase, RBP11-like subunit"/>
    <property type="match status" value="1"/>
</dbReference>
<dbReference type="HAMAP" id="MF_00059">
    <property type="entry name" value="RNApol_bact_RpoA"/>
    <property type="match status" value="1"/>
</dbReference>
<dbReference type="InterPro" id="IPR011262">
    <property type="entry name" value="DNA-dir_RNA_pol_insert"/>
</dbReference>
<dbReference type="InterPro" id="IPR011263">
    <property type="entry name" value="DNA-dir_RNA_pol_RpoA/D/Rpb3"/>
</dbReference>
<dbReference type="InterPro" id="IPR011773">
    <property type="entry name" value="DNA-dir_RpoA"/>
</dbReference>
<dbReference type="InterPro" id="IPR036603">
    <property type="entry name" value="RBP11-like"/>
</dbReference>
<dbReference type="InterPro" id="IPR011260">
    <property type="entry name" value="RNAP_asu_C"/>
</dbReference>
<dbReference type="InterPro" id="IPR036643">
    <property type="entry name" value="RNApol_insert_sf"/>
</dbReference>
<dbReference type="NCBIfam" id="NF003513">
    <property type="entry name" value="PRK05182.1-2"/>
    <property type="match status" value="1"/>
</dbReference>
<dbReference type="NCBIfam" id="NF003519">
    <property type="entry name" value="PRK05182.2-5"/>
    <property type="match status" value="1"/>
</dbReference>
<dbReference type="NCBIfam" id="TIGR02027">
    <property type="entry name" value="rpoA"/>
    <property type="match status" value="1"/>
</dbReference>
<dbReference type="Pfam" id="PF01000">
    <property type="entry name" value="RNA_pol_A_bac"/>
    <property type="match status" value="1"/>
</dbReference>
<dbReference type="Pfam" id="PF03118">
    <property type="entry name" value="RNA_pol_A_CTD"/>
    <property type="match status" value="1"/>
</dbReference>
<dbReference type="Pfam" id="PF01193">
    <property type="entry name" value="RNA_pol_L"/>
    <property type="match status" value="1"/>
</dbReference>
<dbReference type="SMART" id="SM00662">
    <property type="entry name" value="RPOLD"/>
    <property type="match status" value="1"/>
</dbReference>
<dbReference type="SUPFAM" id="SSF47789">
    <property type="entry name" value="C-terminal domain of RNA polymerase alpha subunit"/>
    <property type="match status" value="1"/>
</dbReference>
<dbReference type="SUPFAM" id="SSF56553">
    <property type="entry name" value="Insert subdomain of RNA polymerase alpha subunit"/>
    <property type="match status" value="1"/>
</dbReference>
<dbReference type="SUPFAM" id="SSF55257">
    <property type="entry name" value="RBP11-like subunits of RNA polymerase"/>
    <property type="match status" value="1"/>
</dbReference>
<accession>P66712</accession>
<accession>Q9PE52</accession>